<gene>
    <name type="primary">SHMT1</name>
</gene>
<comment type="function">
    <text evidence="4">Interconversion of serine and glycine.</text>
</comment>
<comment type="catalytic activity">
    <reaction evidence="4">
        <text>(6R)-5,10-methylene-5,6,7,8-tetrahydrofolate + glycine + H2O = (6S)-5,6,7,8-tetrahydrofolate + L-serine</text>
        <dbReference type="Rhea" id="RHEA:15481"/>
        <dbReference type="ChEBI" id="CHEBI:15377"/>
        <dbReference type="ChEBI" id="CHEBI:15636"/>
        <dbReference type="ChEBI" id="CHEBI:33384"/>
        <dbReference type="ChEBI" id="CHEBI:57305"/>
        <dbReference type="ChEBI" id="CHEBI:57453"/>
        <dbReference type="EC" id="2.1.2.1"/>
    </reaction>
</comment>
<comment type="cofactor">
    <cofactor evidence="3">
        <name>pyridoxal 5'-phosphate</name>
        <dbReference type="ChEBI" id="CHEBI:597326"/>
    </cofactor>
</comment>
<comment type="pathway">
    <text evidence="7">One-carbon metabolism; tetrahydrofolate interconversion.</text>
</comment>
<comment type="subunit">
    <text evidence="2 3">Homotetramer (PubMed:10387080). Identified in complex with ABRAXAS2 and the other subunits of the BRISC complex, at least composed of ABRAXAS2, BRCC3/BRCC36, BABAM2 and BABAM1/NBA1.</text>
</comment>
<comment type="subcellular location">
    <subcellularLocation>
        <location>Cytoplasm</location>
    </subcellularLocation>
</comment>
<comment type="PTM">
    <text evidence="5">Deamidation of asparagine produces alternatively aspartate or isoaspartate, which in turn can be converted to aspartate through carboxylmethylation/demethylation.</text>
</comment>
<comment type="miscellaneous">
    <text evidence="7">In eukaryotes there are two forms of the enzymes: a cytosolic one and a mitochondrial one.</text>
</comment>
<comment type="similarity">
    <text evidence="7">Belongs to the SHMT family.</text>
</comment>
<dbReference type="EC" id="2.1.2.1" evidence="4"/>
<dbReference type="EMBL" id="Z11846">
    <property type="protein sequence ID" value="CAA77870.1"/>
    <property type="molecule type" value="mRNA"/>
</dbReference>
<dbReference type="PIR" id="S24342">
    <property type="entry name" value="XYRBSC"/>
</dbReference>
<dbReference type="RefSeq" id="NP_001095187.1">
    <property type="nucleotide sequence ID" value="NM_001101717.1"/>
</dbReference>
<dbReference type="PDB" id="1CJ0">
    <property type="method" value="X-ray"/>
    <property type="resolution" value="2.80 A"/>
    <property type="chains" value="A/B=15-484"/>
</dbReference>
<dbReference type="PDB" id="1LS3">
    <property type="method" value="X-ray"/>
    <property type="resolution" value="2.70 A"/>
    <property type="chains" value="A/B/C/D=2-484"/>
</dbReference>
<dbReference type="PDB" id="1RV3">
    <property type="method" value="X-ray"/>
    <property type="resolution" value="2.40 A"/>
    <property type="chains" value="A/B=2-484"/>
</dbReference>
<dbReference type="PDB" id="1RV4">
    <property type="method" value="X-ray"/>
    <property type="resolution" value="2.95 A"/>
    <property type="chains" value="A/B=2-484"/>
</dbReference>
<dbReference type="PDB" id="1RVU">
    <property type="method" value="X-ray"/>
    <property type="resolution" value="2.50 A"/>
    <property type="chains" value="A/B=2-484"/>
</dbReference>
<dbReference type="PDB" id="1RVY">
    <property type="method" value="X-ray"/>
    <property type="resolution" value="2.90 A"/>
    <property type="chains" value="A/B=2-484"/>
</dbReference>
<dbReference type="PDBsum" id="1CJ0"/>
<dbReference type="PDBsum" id="1LS3"/>
<dbReference type="PDBsum" id="1RV3"/>
<dbReference type="PDBsum" id="1RV4"/>
<dbReference type="PDBsum" id="1RVU"/>
<dbReference type="PDBsum" id="1RVY"/>
<dbReference type="SMR" id="P07511"/>
<dbReference type="FunCoup" id="P07511">
    <property type="interactions" value="1533"/>
</dbReference>
<dbReference type="STRING" id="9986.ENSOCUP00000017814"/>
<dbReference type="iPTMnet" id="P07511"/>
<dbReference type="PaxDb" id="9986-ENSOCUP00000017814"/>
<dbReference type="Ensembl" id="ENSOCUT00000030926.3">
    <property type="protein sequence ID" value="ENSOCUP00000017814.1"/>
    <property type="gene ID" value="ENSOCUG00000021541.3"/>
</dbReference>
<dbReference type="GeneID" id="100009405"/>
<dbReference type="CTD" id="6470"/>
<dbReference type="eggNOG" id="KOG2467">
    <property type="taxonomic scope" value="Eukaryota"/>
</dbReference>
<dbReference type="GeneTree" id="ENSGT00390000002762"/>
<dbReference type="HOGENOM" id="CLU_022477_0_1_1"/>
<dbReference type="InParanoid" id="P07511"/>
<dbReference type="OMA" id="VTNRNAI"/>
<dbReference type="TreeFam" id="TF314667"/>
<dbReference type="BRENDA" id="2.1.2.1">
    <property type="organism ID" value="1749"/>
</dbReference>
<dbReference type="SABIO-RK" id="P07511"/>
<dbReference type="UniPathway" id="UPA00193"/>
<dbReference type="EvolutionaryTrace" id="P07511"/>
<dbReference type="Proteomes" id="UP000001811">
    <property type="component" value="Unplaced"/>
</dbReference>
<dbReference type="Bgee" id="ENSOCUG00000021541">
    <property type="expression patterns" value="Expressed in liver and 16 other cell types or tissues"/>
</dbReference>
<dbReference type="GO" id="GO:0005829">
    <property type="term" value="C:cytosol"/>
    <property type="evidence" value="ECO:0000250"/>
    <property type="project" value="UniProtKB"/>
</dbReference>
<dbReference type="GO" id="GO:0005739">
    <property type="term" value="C:mitochondrion"/>
    <property type="evidence" value="ECO:0007669"/>
    <property type="project" value="TreeGrafter"/>
</dbReference>
<dbReference type="GO" id="GO:0005654">
    <property type="term" value="C:nucleoplasm"/>
    <property type="evidence" value="ECO:0007669"/>
    <property type="project" value="Ensembl"/>
</dbReference>
<dbReference type="GO" id="GO:0004372">
    <property type="term" value="F:glycine hydroxymethyltransferase activity"/>
    <property type="evidence" value="ECO:0000250"/>
    <property type="project" value="UniProtKB"/>
</dbReference>
<dbReference type="GO" id="GO:0048027">
    <property type="term" value="F:mRNA 5'-UTR binding"/>
    <property type="evidence" value="ECO:0007669"/>
    <property type="project" value="Ensembl"/>
</dbReference>
<dbReference type="GO" id="GO:0000900">
    <property type="term" value="F:mRNA regulatory element binding translation repressor activity"/>
    <property type="evidence" value="ECO:0007669"/>
    <property type="project" value="Ensembl"/>
</dbReference>
<dbReference type="GO" id="GO:0042803">
    <property type="term" value="F:protein homodimerization activity"/>
    <property type="evidence" value="ECO:0007669"/>
    <property type="project" value="Ensembl"/>
</dbReference>
<dbReference type="GO" id="GO:0030170">
    <property type="term" value="F:pyridoxal phosphate binding"/>
    <property type="evidence" value="ECO:0000250"/>
    <property type="project" value="UniProtKB"/>
</dbReference>
<dbReference type="GO" id="GO:0070905">
    <property type="term" value="F:serine binding"/>
    <property type="evidence" value="ECO:0007669"/>
    <property type="project" value="Ensembl"/>
</dbReference>
<dbReference type="GO" id="GO:1904482">
    <property type="term" value="P:cellular response to tetrahydrofolate"/>
    <property type="evidence" value="ECO:0007669"/>
    <property type="project" value="Ensembl"/>
</dbReference>
<dbReference type="GO" id="GO:0046655">
    <property type="term" value="P:folic acid metabolic process"/>
    <property type="evidence" value="ECO:0007669"/>
    <property type="project" value="Ensembl"/>
</dbReference>
<dbReference type="GO" id="GO:0019264">
    <property type="term" value="P:glycine biosynthetic process from serine"/>
    <property type="evidence" value="ECO:0007669"/>
    <property type="project" value="InterPro"/>
</dbReference>
<dbReference type="GO" id="GO:0006544">
    <property type="term" value="P:glycine metabolic process"/>
    <property type="evidence" value="ECO:0000250"/>
    <property type="project" value="UniProtKB"/>
</dbReference>
<dbReference type="GO" id="GO:0006565">
    <property type="term" value="P:L-serine catabolic process"/>
    <property type="evidence" value="ECO:0007669"/>
    <property type="project" value="Ensembl"/>
</dbReference>
<dbReference type="GO" id="GO:0006563">
    <property type="term" value="P:L-serine metabolic process"/>
    <property type="evidence" value="ECO:0000250"/>
    <property type="project" value="UniProtKB"/>
</dbReference>
<dbReference type="GO" id="GO:0051289">
    <property type="term" value="P:protein homotetramerization"/>
    <property type="evidence" value="ECO:0000250"/>
    <property type="project" value="UniProtKB"/>
</dbReference>
<dbReference type="GO" id="GO:0009113">
    <property type="term" value="P:purine nucleobase biosynthetic process"/>
    <property type="evidence" value="ECO:0007669"/>
    <property type="project" value="Ensembl"/>
</dbReference>
<dbReference type="GO" id="GO:0035999">
    <property type="term" value="P:tetrahydrofolate interconversion"/>
    <property type="evidence" value="ECO:0007669"/>
    <property type="project" value="UniProtKB-UniPathway"/>
</dbReference>
<dbReference type="GO" id="GO:0046653">
    <property type="term" value="P:tetrahydrofolate metabolic process"/>
    <property type="evidence" value="ECO:0000250"/>
    <property type="project" value="UniProtKB"/>
</dbReference>
<dbReference type="CDD" id="cd00378">
    <property type="entry name" value="SHMT"/>
    <property type="match status" value="1"/>
</dbReference>
<dbReference type="FunFam" id="3.40.640.10:FF:000050">
    <property type="entry name" value="Serine hydroxymethyltransferase"/>
    <property type="match status" value="1"/>
</dbReference>
<dbReference type="FunFam" id="3.90.1150.10:FF:000005">
    <property type="entry name" value="Serine hydroxymethyltransferase"/>
    <property type="match status" value="1"/>
</dbReference>
<dbReference type="Gene3D" id="3.90.1150.10">
    <property type="entry name" value="Aspartate Aminotransferase, domain 1"/>
    <property type="match status" value="1"/>
</dbReference>
<dbReference type="Gene3D" id="3.40.640.10">
    <property type="entry name" value="Type I PLP-dependent aspartate aminotransferase-like (Major domain)"/>
    <property type="match status" value="1"/>
</dbReference>
<dbReference type="HAMAP" id="MF_00051">
    <property type="entry name" value="SHMT"/>
    <property type="match status" value="1"/>
</dbReference>
<dbReference type="InterPro" id="IPR015424">
    <property type="entry name" value="PyrdxlP-dep_Trfase"/>
</dbReference>
<dbReference type="InterPro" id="IPR015421">
    <property type="entry name" value="PyrdxlP-dep_Trfase_major"/>
</dbReference>
<dbReference type="InterPro" id="IPR015422">
    <property type="entry name" value="PyrdxlP-dep_Trfase_small"/>
</dbReference>
<dbReference type="InterPro" id="IPR001085">
    <property type="entry name" value="Ser_HO-MeTrfase"/>
</dbReference>
<dbReference type="InterPro" id="IPR049943">
    <property type="entry name" value="Ser_HO-MeTrfase-like"/>
</dbReference>
<dbReference type="InterPro" id="IPR019798">
    <property type="entry name" value="Ser_HO-MeTrfase_PLP_BS"/>
</dbReference>
<dbReference type="InterPro" id="IPR039429">
    <property type="entry name" value="SHMT-like_dom"/>
</dbReference>
<dbReference type="NCBIfam" id="NF000586">
    <property type="entry name" value="PRK00011.1"/>
    <property type="match status" value="1"/>
</dbReference>
<dbReference type="PANTHER" id="PTHR11680">
    <property type="entry name" value="SERINE HYDROXYMETHYLTRANSFERASE"/>
    <property type="match status" value="1"/>
</dbReference>
<dbReference type="PANTHER" id="PTHR11680:SF59">
    <property type="entry name" value="SERINE HYDROXYMETHYLTRANSFERASE, CYTOSOLIC"/>
    <property type="match status" value="1"/>
</dbReference>
<dbReference type="Pfam" id="PF00464">
    <property type="entry name" value="SHMT"/>
    <property type="match status" value="1"/>
</dbReference>
<dbReference type="PIRSF" id="PIRSF000412">
    <property type="entry name" value="SHMT"/>
    <property type="match status" value="1"/>
</dbReference>
<dbReference type="SUPFAM" id="SSF53383">
    <property type="entry name" value="PLP-dependent transferases"/>
    <property type="match status" value="1"/>
</dbReference>
<dbReference type="PROSITE" id="PS00096">
    <property type="entry name" value="SHMT"/>
    <property type="match status" value="1"/>
</dbReference>
<keyword id="KW-0002">3D-structure</keyword>
<keyword id="KW-0007">Acetylation</keyword>
<keyword id="KW-0963">Cytoplasm</keyword>
<keyword id="KW-0903">Direct protein sequencing</keyword>
<keyword id="KW-1017">Isopeptide bond</keyword>
<keyword id="KW-0554">One-carbon metabolism</keyword>
<keyword id="KW-0663">Pyridoxal phosphate</keyword>
<keyword id="KW-1185">Reference proteome</keyword>
<keyword id="KW-0808">Transferase</keyword>
<proteinExistence type="evidence at protein level"/>
<name>GLYC_RABIT</name>
<sequence length="484" mass="52975">MATAVNGAPRDAALWSSHEQMLAQPLKDSDAEVYDIIKKESNRQRVGLELIASENFASRAVLEALGSCLNNKYSEGYPGQRYYGGTEHIDELETLCQKRALQAYGLDPQCWGVNVQPYSGSPANFAVYTALVEPHGRIMGLDLPDGGHLTHGFMTDKKKISATSIFFESMAYKVNPDTGYIDYDRLEENARLFHPKLIIAGTSCYSRNLDYGRLRKIADENGAYLMADMAHISGLVVAGVVPSPFEHCHVVTTTTHKTLRGCRAGMIFYRRGVRSVDPKTGKEILYNLESLINSAVFPGLQGGPHNHAIAGVAVALKQAMTPEFKEYQRQVVANCRALSAALVELGYKIVTGGSDNHLILVDLRSKGTDGGRAEKVLEACSIACNKNTCPGDKSALRPSGLRLGTPALTSRGLLEKDFQKVAHFIHRGIELTVQIQDDTGPRATLKEFKEKLAGDEKHQRAVRALRQEVESFAALFPLPGLPGF</sequence>
<evidence type="ECO:0000250" key="1"/>
<evidence type="ECO:0000250" key="2">
    <source>
        <dbReference type="UniProtKB" id="P34896"/>
    </source>
</evidence>
<evidence type="ECO:0000269" key="3">
    <source>
    </source>
</evidence>
<evidence type="ECO:0000269" key="4">
    <source>
    </source>
</evidence>
<evidence type="ECO:0000269" key="5">
    <source>
    </source>
</evidence>
<evidence type="ECO:0000269" key="6">
    <source>
    </source>
</evidence>
<evidence type="ECO:0000305" key="7"/>
<evidence type="ECO:0000305" key="8">
    <source>
    </source>
</evidence>
<evidence type="ECO:0007829" key="9">
    <source>
        <dbReference type="PDB" id="1CJ0"/>
    </source>
</evidence>
<evidence type="ECO:0007829" key="10">
    <source>
        <dbReference type="PDB" id="1LS3"/>
    </source>
</evidence>
<evidence type="ECO:0007829" key="11">
    <source>
        <dbReference type="PDB" id="1RV3"/>
    </source>
</evidence>
<organism>
    <name type="scientific">Oryctolagus cuniculus</name>
    <name type="common">Rabbit</name>
    <dbReference type="NCBI Taxonomy" id="9986"/>
    <lineage>
        <taxon>Eukaryota</taxon>
        <taxon>Metazoa</taxon>
        <taxon>Chordata</taxon>
        <taxon>Craniata</taxon>
        <taxon>Vertebrata</taxon>
        <taxon>Euteleostomi</taxon>
        <taxon>Mammalia</taxon>
        <taxon>Eutheria</taxon>
        <taxon>Euarchontoglires</taxon>
        <taxon>Glires</taxon>
        <taxon>Lagomorpha</taxon>
        <taxon>Leporidae</taxon>
        <taxon>Oryctolagus</taxon>
    </lineage>
</organism>
<accession>P07511</accession>
<protein>
    <recommendedName>
        <fullName>Serine hydroxymethyltransferase, cytosolic</fullName>
        <shortName>SHMT</shortName>
        <ecNumber evidence="4">2.1.2.1</ecNumber>
    </recommendedName>
    <alternativeName>
        <fullName>Glycine hydroxymethyltransferase</fullName>
    </alternativeName>
    <alternativeName>
        <fullName>Serine methylase</fullName>
    </alternativeName>
</protein>
<reference key="1">
    <citation type="journal article" date="1992" name="Biochem. J.">
        <title>Nucleotide sequence and expression of a cDNA encoding rabbit liver cytosolic serine hydroxymethyltransferase.</title>
        <authorList>
            <person name="Byrne P.C."/>
            <person name="Sanders P.G."/>
            <person name="Snell K."/>
        </authorList>
    </citation>
    <scope>NUCLEOTIDE SEQUENCE [MRNA]</scope>
    <scope>FUNCTION</scope>
    <scope>CATALYTIC ACTIVITY</scope>
    <source>
        <strain>New Zealand white</strain>
        <tissue>Liver</tissue>
    </source>
</reference>
<reference key="2">
    <citation type="journal article" date="1987" name="J. Biol. Chem.">
        <title>The primary structure of rabbit liver cytosolic serine hydroxymethyltransferase.</title>
        <authorList>
            <person name="Martini F."/>
            <person name="Angelaccio S."/>
            <person name="Pascarella S."/>
            <person name="Barra D."/>
            <person name="Bossa F."/>
            <person name="Schirch V."/>
        </authorList>
    </citation>
    <scope>PROTEIN SEQUENCE OF 2-484</scope>
    <scope>ACETYLATION AT ALA-2</scope>
    <source>
        <tissue>Liver</tissue>
    </source>
</reference>
<reference key="3">
    <citation type="journal article" date="1990" name="J. Biol. Chem.">
        <title>Evidence for the in vivo deamidation and isomerization of an asparaginyl residue in cytosolic serine hydroxymethyltransferase.</title>
        <authorList>
            <person name="Artigues A."/>
            <person name="Birkett A."/>
            <person name="Schirch V."/>
        </authorList>
    </citation>
    <scope>PROTEIN SEQUENCE OF 2-15</scope>
    <scope>DEAMIDATION AT ASN-6</scope>
    <scope>ISOPEPTIDE BOND AT ASN-6</scope>
</reference>
<reference key="4">
    <citation type="journal article" date="1980" name="J. Biol. Chem.">
        <title>Evidence for a sulfhydryl group at the active site of serine transhydroxymethylase.</title>
        <authorList>
            <person name="Schirch L."/>
            <person name="Slagel S."/>
            <person name="Barra D."/>
            <person name="Martini F."/>
            <person name="Bossa F."/>
        </authorList>
    </citation>
    <scope>PROTEIN SEQUENCE OF 194-205</scope>
    <scope>ACTIVE SITE CYS-204</scope>
</reference>
<reference key="5">
    <citation type="journal article" date="1999" name="Biochemistry">
        <title>Crystal structure of rabbit cytosolic serine hydroxymethyltransferase at 2.8-A resolution: mechanistic implications.</title>
        <authorList>
            <person name="Scarsdale J.N."/>
            <person name="Kazanina G."/>
            <person name="Radaev S."/>
            <person name="Schirch V."/>
            <person name="Wright H.T."/>
        </authorList>
    </citation>
    <scope>X-RAY CRYSTALLOGRAPHY (2.8 ANGSTROMS) IN COMPLEX WITH PYRIDOXAL PHOSPHATE</scope>
    <scope>COFACTOR</scope>
    <scope>SUBUNIT</scope>
    <source>
        <strain>New Zealand white</strain>
        <tissue>Liver</tissue>
    </source>
</reference>
<feature type="initiator methionine" description="Removed" evidence="5 6">
    <location>
        <position position="1"/>
    </location>
</feature>
<feature type="chain" id="PRO_0000113506" description="Serine hydroxymethyltransferase, cytosolic">
    <location>
        <begin position="2"/>
        <end position="484"/>
    </location>
</feature>
<feature type="active site" description="Nucleophile" evidence="8">
    <location>
        <position position="204"/>
    </location>
</feature>
<feature type="active site" description="Proton donor" evidence="1">
    <location>
        <position position="256"/>
    </location>
</feature>
<feature type="modified residue" description="N-acetylalanine" evidence="6">
    <location>
        <position position="2"/>
    </location>
</feature>
<feature type="modified residue" description="Deamidated asparagine; alternate" evidence="5">
    <location>
        <position position="6"/>
    </location>
</feature>
<feature type="modified residue" description="N6-(pyridoxal phosphate)lysine" evidence="3">
    <location>
        <position position="257"/>
    </location>
</feature>
<feature type="cross-link" description="Isoaspartyl glycine isopeptide (Asn-Gly); alternate" evidence="5">
    <location>
        <begin position="6"/>
        <end position="7"/>
    </location>
</feature>
<feature type="helix" evidence="11">
    <location>
        <begin position="18"/>
        <end position="21"/>
    </location>
</feature>
<feature type="strand" evidence="9">
    <location>
        <begin position="22"/>
        <end position="24"/>
    </location>
</feature>
<feature type="helix" evidence="11">
    <location>
        <begin position="26"/>
        <end position="29"/>
    </location>
</feature>
<feature type="helix" evidence="11">
    <location>
        <begin position="31"/>
        <end position="45"/>
    </location>
</feature>
<feature type="strand" evidence="11">
    <location>
        <begin position="46"/>
        <end position="49"/>
    </location>
</feature>
<feature type="helix" evidence="11">
    <location>
        <begin position="59"/>
        <end position="65"/>
    </location>
</feature>
<feature type="helix" evidence="11">
    <location>
        <begin position="68"/>
        <end position="70"/>
    </location>
</feature>
<feature type="strand" evidence="11">
    <location>
        <begin position="80"/>
        <end position="84"/>
    </location>
</feature>
<feature type="helix" evidence="11">
    <location>
        <begin position="87"/>
        <end position="103"/>
    </location>
</feature>
<feature type="turn" evidence="11">
    <location>
        <begin position="108"/>
        <end position="110"/>
    </location>
</feature>
<feature type="strand" evidence="11">
    <location>
        <begin position="111"/>
        <end position="114"/>
    </location>
</feature>
<feature type="helix" evidence="11">
    <location>
        <begin position="120"/>
        <end position="131"/>
    </location>
</feature>
<feature type="strand" evidence="11">
    <location>
        <begin position="137"/>
        <end position="141"/>
    </location>
</feature>
<feature type="helix" evidence="11">
    <location>
        <begin position="143"/>
        <end position="145"/>
    </location>
</feature>
<feature type="helix" evidence="11">
    <location>
        <begin position="149"/>
        <end position="151"/>
    </location>
</feature>
<feature type="helix" evidence="11">
    <location>
        <begin position="162"/>
        <end position="166"/>
    </location>
</feature>
<feature type="strand" evidence="11">
    <location>
        <begin position="167"/>
        <end position="172"/>
    </location>
</feature>
<feature type="turn" evidence="11">
    <location>
        <begin position="176"/>
        <end position="178"/>
    </location>
</feature>
<feature type="strand" evidence="10">
    <location>
        <begin position="179"/>
        <end position="181"/>
    </location>
</feature>
<feature type="helix" evidence="11">
    <location>
        <begin position="183"/>
        <end position="193"/>
    </location>
</feature>
<feature type="strand" evidence="11">
    <location>
        <begin position="196"/>
        <end position="200"/>
    </location>
</feature>
<feature type="helix" evidence="11">
    <location>
        <begin position="211"/>
        <end position="220"/>
    </location>
</feature>
<feature type="strand" evidence="11">
    <location>
        <begin position="224"/>
        <end position="228"/>
    </location>
</feature>
<feature type="turn" evidence="11">
    <location>
        <begin position="230"/>
        <end position="232"/>
    </location>
</feature>
<feature type="helix" evidence="11">
    <location>
        <begin position="233"/>
        <end position="238"/>
    </location>
</feature>
<feature type="helix" evidence="11">
    <location>
        <begin position="244"/>
        <end position="246"/>
    </location>
</feature>
<feature type="strand" evidence="11">
    <location>
        <begin position="249"/>
        <end position="256"/>
    </location>
</feature>
<feature type="helix" evidence="11">
    <location>
        <begin position="257"/>
        <end position="259"/>
    </location>
</feature>
<feature type="strand" evidence="11">
    <location>
        <begin position="265"/>
        <end position="270"/>
    </location>
</feature>
<feature type="helix" evidence="11">
    <location>
        <begin position="288"/>
        <end position="296"/>
    </location>
</feature>
<feature type="turn" evidence="11">
    <location>
        <begin position="297"/>
        <end position="300"/>
    </location>
</feature>
<feature type="helix" evidence="11">
    <location>
        <begin position="306"/>
        <end position="319"/>
    </location>
</feature>
<feature type="helix" evidence="11">
    <location>
        <begin position="322"/>
        <end position="344"/>
    </location>
</feature>
<feature type="helix" evidence="11">
    <location>
        <begin position="350"/>
        <end position="352"/>
    </location>
</feature>
<feature type="strand" evidence="11">
    <location>
        <begin position="355"/>
        <end position="362"/>
    </location>
</feature>
<feature type="helix" evidence="11">
    <location>
        <begin position="363"/>
        <end position="366"/>
    </location>
</feature>
<feature type="helix" evidence="11">
    <location>
        <begin position="370"/>
        <end position="379"/>
    </location>
</feature>
<feature type="strand" evidence="11">
    <location>
        <begin position="385"/>
        <end position="387"/>
    </location>
</feature>
<feature type="strand" evidence="10">
    <location>
        <begin position="393"/>
        <end position="397"/>
    </location>
</feature>
<feature type="strand" evidence="11">
    <location>
        <begin position="400"/>
        <end position="404"/>
    </location>
</feature>
<feature type="helix" evidence="11">
    <location>
        <begin position="406"/>
        <end position="410"/>
    </location>
</feature>
<feature type="helix" evidence="11">
    <location>
        <begin position="415"/>
        <end position="437"/>
    </location>
</feature>
<feature type="helix" evidence="11">
    <location>
        <begin position="445"/>
        <end position="453"/>
    </location>
</feature>
<feature type="helix" evidence="11">
    <location>
        <begin position="456"/>
        <end position="473"/>
    </location>
</feature>
<feature type="strand" evidence="11">
    <location>
        <begin position="480"/>
        <end position="482"/>
    </location>
</feature>